<feature type="chain" id="PRO_0000436861" description="Myb family transcription factor PHL4">
    <location>
        <begin position="1"/>
        <end position="397"/>
    </location>
</feature>
<feature type="domain" description="HTH myb-type" evidence="2">
    <location>
        <begin position="228"/>
        <end position="288"/>
    </location>
</feature>
<feature type="DNA-binding region" description="H-T-H motif" evidence="2">
    <location>
        <begin position="259"/>
        <end position="284"/>
    </location>
</feature>
<feature type="region of interest" description="Disordered" evidence="3">
    <location>
        <begin position="1"/>
        <end position="27"/>
    </location>
</feature>
<feature type="region of interest" description="Coiled coil" evidence="5">
    <location>
        <begin position="319"/>
        <end position="339"/>
    </location>
</feature>
<feature type="region of interest" description="Disordered" evidence="3">
    <location>
        <begin position="359"/>
        <end position="397"/>
    </location>
</feature>
<feature type="short sequence motif" description="LHEQLE" evidence="5">
    <location>
        <begin position="332"/>
        <end position="337"/>
    </location>
</feature>
<feature type="compositionally biased region" description="Basic and acidic residues" evidence="3">
    <location>
        <begin position="386"/>
        <end position="397"/>
    </location>
</feature>
<feature type="modified residue" description="Phosphoserine" evidence="1">
    <location>
        <position position="387"/>
    </location>
</feature>
<accession>Q8GXC2</accession>
<accession>Q9SK62</accession>
<protein>
    <recommendedName>
        <fullName evidence="5">Myb family transcription factor PHL4</fullName>
    </recommendedName>
    <alternativeName>
        <fullName evidence="5">Protein PHR1-LIKE 4</fullName>
    </alternativeName>
</protein>
<proteinExistence type="evidence at transcript level"/>
<evidence type="ECO:0000250" key="1">
    <source>
        <dbReference type="UniProtKB" id="Q94CL7"/>
    </source>
</evidence>
<evidence type="ECO:0000255" key="2">
    <source>
        <dbReference type="PROSITE-ProRule" id="PRU00625"/>
    </source>
</evidence>
<evidence type="ECO:0000256" key="3">
    <source>
        <dbReference type="SAM" id="MobiDB-lite"/>
    </source>
</evidence>
<evidence type="ECO:0000269" key="4">
    <source>
    </source>
</evidence>
<evidence type="ECO:0000305" key="5"/>
<evidence type="ECO:0000312" key="6">
    <source>
        <dbReference type="Araport" id="AT2G20400"/>
    </source>
</evidence>
<evidence type="ECO:0000312" key="7">
    <source>
        <dbReference type="EMBL" id="AAD21748.1"/>
    </source>
</evidence>
<evidence type="ECO:0000312" key="8">
    <source>
        <dbReference type="EMBL" id="BAC42929.1"/>
    </source>
</evidence>
<comment type="function">
    <text evidence="4">Transcription factor involved in male gametophyte development.</text>
</comment>
<comment type="subcellular location">
    <subcellularLocation>
        <location evidence="2">Nucleus</location>
    </subcellularLocation>
</comment>
<comment type="disruption phenotype">
    <text evidence="4">Separated male germ unit (MGU) with all nuclei separated from each other making a wide triangular figure.</text>
</comment>
<comment type="similarity">
    <text evidence="5">Belongs to the MYB-CC family.</text>
</comment>
<comment type="sequence caution" evidence="5">
    <conflict type="erroneous gene model prediction">
        <sequence resource="EMBL-CDS" id="AAD21748"/>
    </conflict>
</comment>
<keyword id="KW-0175">Coiled coil</keyword>
<keyword id="KW-0238">DNA-binding</keyword>
<keyword id="KW-0539">Nucleus</keyword>
<keyword id="KW-0597">Phosphoprotein</keyword>
<keyword id="KW-1185">Reference proteome</keyword>
<keyword id="KW-0804">Transcription</keyword>
<keyword id="KW-0805">Transcription regulation</keyword>
<sequence>MIPNDDDDANSMKNYPLNDDDANSMKNYPLNDDDANSMENYPLRSIPTELSHTCSLIPPSLPNPSEAAADMSFNSELNQIMARPCDMLPANGGAVGHNPFLEPGFNCPETTDWIPSPLPHIYFPSGSPNLIMEDGVIDEIHKQSDLPLWYDDLITTDEDPLMSSILGDLLLDTNFNSASKVQQPSMQSQIQQPQAVLQQPSSCVELRPLDRTVSSNSNNNSNSNNAAAAAKGRMRWTPELHEVFVDAVNQLGGSNEATPKGVLKHMKVEGLTIFHVKSHLQKYRTAKYIPVPSEGSPEARLTPLEQITSDDTKRGIDITETLRIQMEHQKKLHEQLESLRTMQLRIEEQGKALLMMIEKQNMGFGGPEQGEKTSAKTPENGSEESESPRPKRPRNEE</sequence>
<gene>
    <name evidence="5" type="primary">PHL4</name>
    <name evidence="6" type="ordered locus">At2g20400</name>
    <name evidence="7" type="ORF">F11A3.5</name>
</gene>
<dbReference type="EMBL" id="AC006569">
    <property type="protein sequence ID" value="AAD21748.1"/>
    <property type="status" value="ALT_SEQ"/>
    <property type="molecule type" value="Genomic_DNA"/>
</dbReference>
<dbReference type="EMBL" id="CP002685">
    <property type="protein sequence ID" value="AEC07003.1"/>
    <property type="molecule type" value="Genomic_DNA"/>
</dbReference>
<dbReference type="EMBL" id="AK118313">
    <property type="protein sequence ID" value="BAC42929.1"/>
    <property type="molecule type" value="mRNA"/>
</dbReference>
<dbReference type="EMBL" id="BT006119">
    <property type="protein sequence ID" value="AAP04104.1"/>
    <property type="molecule type" value="mRNA"/>
</dbReference>
<dbReference type="PIR" id="G84588">
    <property type="entry name" value="G84588"/>
</dbReference>
<dbReference type="RefSeq" id="NP_179630.2">
    <property type="nucleotide sequence ID" value="NM_127599.3"/>
</dbReference>
<dbReference type="SMR" id="Q8GXC2"/>
<dbReference type="FunCoup" id="Q8GXC2">
    <property type="interactions" value="72"/>
</dbReference>
<dbReference type="STRING" id="3702.Q8GXC2"/>
<dbReference type="iPTMnet" id="Q8GXC2"/>
<dbReference type="PaxDb" id="3702-AT2G20400.1"/>
<dbReference type="ProteomicsDB" id="236747"/>
<dbReference type="EnsemblPlants" id="AT2G20400.1">
    <property type="protein sequence ID" value="AT2G20400.1"/>
    <property type="gene ID" value="AT2G20400"/>
</dbReference>
<dbReference type="GeneID" id="816559"/>
<dbReference type="Gramene" id="AT2G20400.1">
    <property type="protein sequence ID" value="AT2G20400.1"/>
    <property type="gene ID" value="AT2G20400"/>
</dbReference>
<dbReference type="KEGG" id="ath:AT2G20400"/>
<dbReference type="Araport" id="AT2G20400"/>
<dbReference type="TAIR" id="AT2G20400">
    <property type="gene designation" value="PHL4"/>
</dbReference>
<dbReference type="eggNOG" id="ENOG502QXMH">
    <property type="taxonomic scope" value="Eukaryota"/>
</dbReference>
<dbReference type="HOGENOM" id="CLU_044541_2_0_1"/>
<dbReference type="InParanoid" id="Q8GXC2"/>
<dbReference type="PhylomeDB" id="Q8GXC2"/>
<dbReference type="PRO" id="PR:Q8GXC2"/>
<dbReference type="Proteomes" id="UP000006548">
    <property type="component" value="Chromosome 2"/>
</dbReference>
<dbReference type="ExpressionAtlas" id="Q8GXC2">
    <property type="expression patterns" value="baseline and differential"/>
</dbReference>
<dbReference type="GO" id="GO:0005634">
    <property type="term" value="C:nucleus"/>
    <property type="evidence" value="ECO:0000314"/>
    <property type="project" value="TAIR"/>
</dbReference>
<dbReference type="GO" id="GO:0003677">
    <property type="term" value="F:DNA binding"/>
    <property type="evidence" value="ECO:0007669"/>
    <property type="project" value="UniProtKB-KW"/>
</dbReference>
<dbReference type="GO" id="GO:0003700">
    <property type="term" value="F:DNA-binding transcription factor activity"/>
    <property type="evidence" value="ECO:0000250"/>
    <property type="project" value="TAIR"/>
</dbReference>
<dbReference type="GO" id="GO:0009555">
    <property type="term" value="P:pollen development"/>
    <property type="evidence" value="ECO:0000315"/>
    <property type="project" value="TAIR"/>
</dbReference>
<dbReference type="GO" id="GO:0006355">
    <property type="term" value="P:regulation of DNA-templated transcription"/>
    <property type="evidence" value="ECO:0000304"/>
    <property type="project" value="TAIR"/>
</dbReference>
<dbReference type="FunFam" id="1.10.10.60:FF:000002">
    <property type="entry name" value="Myb family transcription factor"/>
    <property type="match status" value="1"/>
</dbReference>
<dbReference type="Gene3D" id="1.10.10.60">
    <property type="entry name" value="Homeodomain-like"/>
    <property type="match status" value="1"/>
</dbReference>
<dbReference type="InterPro" id="IPR009057">
    <property type="entry name" value="Homeodomain-like_sf"/>
</dbReference>
<dbReference type="InterPro" id="IPR025756">
    <property type="entry name" value="Myb_CC_LHEQLE"/>
</dbReference>
<dbReference type="InterPro" id="IPR017930">
    <property type="entry name" value="Myb_dom"/>
</dbReference>
<dbReference type="InterPro" id="IPR006447">
    <property type="entry name" value="Myb_dom_plants"/>
</dbReference>
<dbReference type="InterPro" id="IPR046955">
    <property type="entry name" value="PHR1-like"/>
</dbReference>
<dbReference type="InterPro" id="IPR001005">
    <property type="entry name" value="SANT/Myb"/>
</dbReference>
<dbReference type="NCBIfam" id="TIGR01557">
    <property type="entry name" value="myb_SHAQKYF"/>
    <property type="match status" value="1"/>
</dbReference>
<dbReference type="PANTHER" id="PTHR31499:SF80">
    <property type="entry name" value="HTH MYB-TYPE DOMAIN-CONTAINING PROTEIN"/>
    <property type="match status" value="1"/>
</dbReference>
<dbReference type="PANTHER" id="PTHR31499">
    <property type="entry name" value="MYB FAMILY TRANSCRIPTION FACTOR PHL11"/>
    <property type="match status" value="1"/>
</dbReference>
<dbReference type="Pfam" id="PF14379">
    <property type="entry name" value="Myb_CC_LHEQLE"/>
    <property type="match status" value="1"/>
</dbReference>
<dbReference type="Pfam" id="PF00249">
    <property type="entry name" value="Myb_DNA-binding"/>
    <property type="match status" value="1"/>
</dbReference>
<dbReference type="SUPFAM" id="SSF46689">
    <property type="entry name" value="Homeodomain-like"/>
    <property type="match status" value="1"/>
</dbReference>
<dbReference type="PROSITE" id="PS51294">
    <property type="entry name" value="HTH_MYB"/>
    <property type="match status" value="1"/>
</dbReference>
<organism evidence="8">
    <name type="scientific">Arabidopsis thaliana</name>
    <name type="common">Mouse-ear cress</name>
    <dbReference type="NCBI Taxonomy" id="3702"/>
    <lineage>
        <taxon>Eukaryota</taxon>
        <taxon>Viridiplantae</taxon>
        <taxon>Streptophyta</taxon>
        <taxon>Embryophyta</taxon>
        <taxon>Tracheophyta</taxon>
        <taxon>Spermatophyta</taxon>
        <taxon>Magnoliopsida</taxon>
        <taxon>eudicotyledons</taxon>
        <taxon>Gunneridae</taxon>
        <taxon>Pentapetalae</taxon>
        <taxon>rosids</taxon>
        <taxon>malvids</taxon>
        <taxon>Brassicales</taxon>
        <taxon>Brassicaceae</taxon>
        <taxon>Camelineae</taxon>
        <taxon>Arabidopsis</taxon>
    </lineage>
</organism>
<reference key="1">
    <citation type="journal article" date="1999" name="Nature">
        <title>Sequence and analysis of chromosome 2 of the plant Arabidopsis thaliana.</title>
        <authorList>
            <person name="Lin X."/>
            <person name="Kaul S."/>
            <person name="Rounsley S.D."/>
            <person name="Shea T.P."/>
            <person name="Benito M.-I."/>
            <person name="Town C.D."/>
            <person name="Fujii C.Y."/>
            <person name="Mason T.M."/>
            <person name="Bowman C.L."/>
            <person name="Barnstead M.E."/>
            <person name="Feldblyum T.V."/>
            <person name="Buell C.R."/>
            <person name="Ketchum K.A."/>
            <person name="Lee J.J."/>
            <person name="Ronning C.M."/>
            <person name="Koo H.L."/>
            <person name="Moffat K.S."/>
            <person name="Cronin L.A."/>
            <person name="Shen M."/>
            <person name="Pai G."/>
            <person name="Van Aken S."/>
            <person name="Umayam L."/>
            <person name="Tallon L.J."/>
            <person name="Gill J.E."/>
            <person name="Adams M.D."/>
            <person name="Carrera A.J."/>
            <person name="Creasy T.H."/>
            <person name="Goodman H.M."/>
            <person name="Somerville C.R."/>
            <person name="Copenhaver G.P."/>
            <person name="Preuss D."/>
            <person name="Nierman W.C."/>
            <person name="White O."/>
            <person name="Eisen J.A."/>
            <person name="Salzberg S.L."/>
            <person name="Fraser C.M."/>
            <person name="Venter J.C."/>
        </authorList>
    </citation>
    <scope>NUCLEOTIDE SEQUENCE [LARGE SCALE GENOMIC DNA]</scope>
    <source>
        <strain>cv. Columbia</strain>
    </source>
</reference>
<reference key="2">
    <citation type="journal article" date="2017" name="Plant J.">
        <title>Araport11: a complete reannotation of the Arabidopsis thaliana reference genome.</title>
        <authorList>
            <person name="Cheng C.Y."/>
            <person name="Krishnakumar V."/>
            <person name="Chan A.P."/>
            <person name="Thibaud-Nissen F."/>
            <person name="Schobel S."/>
            <person name="Town C.D."/>
        </authorList>
    </citation>
    <scope>GENOME REANNOTATION</scope>
    <source>
        <strain>cv. Columbia</strain>
    </source>
</reference>
<reference key="3">
    <citation type="journal article" date="2002" name="Science">
        <title>Functional annotation of a full-length Arabidopsis cDNA collection.</title>
        <authorList>
            <person name="Seki M."/>
            <person name="Narusaka M."/>
            <person name="Kamiya A."/>
            <person name="Ishida J."/>
            <person name="Satou M."/>
            <person name="Sakurai T."/>
            <person name="Nakajima M."/>
            <person name="Enju A."/>
            <person name="Akiyama K."/>
            <person name="Oono Y."/>
            <person name="Muramatsu M."/>
            <person name="Hayashizaki Y."/>
            <person name="Kawai J."/>
            <person name="Carninci P."/>
            <person name="Itoh M."/>
            <person name="Ishii Y."/>
            <person name="Arakawa T."/>
            <person name="Shibata K."/>
            <person name="Shinagawa A."/>
            <person name="Shinozaki K."/>
        </authorList>
    </citation>
    <scope>NUCLEOTIDE SEQUENCE [LARGE SCALE MRNA]</scope>
    <source>
        <strain>cv. Columbia</strain>
    </source>
</reference>
<reference key="4">
    <citation type="journal article" date="2003" name="Science">
        <title>Empirical analysis of transcriptional activity in the Arabidopsis genome.</title>
        <authorList>
            <person name="Yamada K."/>
            <person name="Lim J."/>
            <person name="Dale J.M."/>
            <person name="Chen H."/>
            <person name="Shinn P."/>
            <person name="Palm C.J."/>
            <person name="Southwick A.M."/>
            <person name="Wu H.C."/>
            <person name="Kim C.J."/>
            <person name="Nguyen M."/>
            <person name="Pham P.K."/>
            <person name="Cheuk R.F."/>
            <person name="Karlin-Newmann G."/>
            <person name="Liu S.X."/>
            <person name="Lam B."/>
            <person name="Sakano H."/>
            <person name="Wu T."/>
            <person name="Yu G."/>
            <person name="Miranda M."/>
            <person name="Quach H.L."/>
            <person name="Tripp M."/>
            <person name="Chang C.H."/>
            <person name="Lee J.M."/>
            <person name="Toriumi M.J."/>
            <person name="Chan M.M."/>
            <person name="Tang C.C."/>
            <person name="Onodera C.S."/>
            <person name="Deng J.M."/>
            <person name="Akiyama K."/>
            <person name="Ansari Y."/>
            <person name="Arakawa T."/>
            <person name="Banh J."/>
            <person name="Banno F."/>
            <person name="Bowser L."/>
            <person name="Brooks S.Y."/>
            <person name="Carninci P."/>
            <person name="Chao Q."/>
            <person name="Choy N."/>
            <person name="Enju A."/>
            <person name="Goldsmith A.D."/>
            <person name="Gurjal M."/>
            <person name="Hansen N.F."/>
            <person name="Hayashizaki Y."/>
            <person name="Johnson-Hopson C."/>
            <person name="Hsuan V.W."/>
            <person name="Iida K."/>
            <person name="Karnes M."/>
            <person name="Khan S."/>
            <person name="Koesema E."/>
            <person name="Ishida J."/>
            <person name="Jiang P.X."/>
            <person name="Jones T."/>
            <person name="Kawai J."/>
            <person name="Kamiya A."/>
            <person name="Meyers C."/>
            <person name="Nakajima M."/>
            <person name="Narusaka M."/>
            <person name="Seki M."/>
            <person name="Sakurai T."/>
            <person name="Satou M."/>
            <person name="Tamse R."/>
            <person name="Vaysberg M."/>
            <person name="Wallender E.K."/>
            <person name="Wong C."/>
            <person name="Yamamura Y."/>
            <person name="Yuan S."/>
            <person name="Shinozaki K."/>
            <person name="Davis R.W."/>
            <person name="Theologis A."/>
            <person name="Ecker J.R."/>
        </authorList>
    </citation>
    <scope>NUCLEOTIDE SEQUENCE [LARGE SCALE MRNA]</scope>
    <source>
        <strain>cv. Columbia</strain>
    </source>
</reference>
<reference key="5">
    <citation type="journal article" date="2001" name="Genes Dev.">
        <title>A conserved MYB transcription factor involved in phosphate starvation signaling both in vascular plants and in unicellular algae.</title>
        <authorList>
            <person name="Rubio V."/>
            <person name="Linhares F."/>
            <person name="Solano R."/>
            <person name="Martin A.C."/>
            <person name="Iglesias J."/>
            <person name="Leyva A."/>
            <person name="Paz-Ares J."/>
        </authorList>
    </citation>
    <scope>GENE FAMILY</scope>
</reference>
<reference key="6">
    <citation type="journal article" date="2012" name="Sex. Plant Reprod.">
        <title>Wide-scale screening of T-DNA lines for transcription factor genes affecting male gametophyte development in Arabidopsis.</title>
        <authorList>
            <person name="Renak D."/>
            <person name="Dupl'akova N."/>
            <person name="Honys D."/>
        </authorList>
    </citation>
    <scope>FUNCTION</scope>
    <scope>DISRUPTION PHENOTYPE</scope>
</reference>
<name>PHL4_ARATH</name>